<keyword id="KW-1185">Reference proteome</keyword>
<organism>
    <name type="scientific">Schizosaccharomyces pombe (strain 972 / ATCC 24843)</name>
    <name type="common">Fission yeast</name>
    <dbReference type="NCBI Taxonomy" id="284812"/>
    <lineage>
        <taxon>Eukaryota</taxon>
        <taxon>Fungi</taxon>
        <taxon>Dikarya</taxon>
        <taxon>Ascomycota</taxon>
        <taxon>Taphrinomycotina</taxon>
        <taxon>Schizosaccharomycetes</taxon>
        <taxon>Schizosaccharomycetales</taxon>
        <taxon>Schizosaccharomycetaceae</taxon>
        <taxon>Schizosaccharomyces</taxon>
    </lineage>
</organism>
<dbReference type="EMBL" id="CU329670">
    <property type="protein sequence ID" value="CAA91135.2"/>
    <property type="molecule type" value="Genomic_DNA"/>
</dbReference>
<dbReference type="PIR" id="S62455">
    <property type="entry name" value="S62455"/>
</dbReference>
<dbReference type="PIR" id="T38845">
    <property type="entry name" value="S62478"/>
</dbReference>
<dbReference type="RefSeq" id="NP_593060.2">
    <property type="nucleotide sequence ID" value="NM_001018458.2"/>
</dbReference>
<dbReference type="SMR" id="Q09802"/>
<dbReference type="BioGRID" id="278245">
    <property type="interactions" value="1"/>
</dbReference>
<dbReference type="FunCoup" id="Q09802">
    <property type="interactions" value="417"/>
</dbReference>
<dbReference type="STRING" id="284812.Q09802"/>
<dbReference type="PaxDb" id="4896-SPAC22G7.11c.1"/>
<dbReference type="EnsemblFungi" id="SPAC22G7.11c.1">
    <property type="protein sequence ID" value="SPAC22G7.11c.1:pep"/>
    <property type="gene ID" value="SPAC22G7.11c"/>
</dbReference>
<dbReference type="GeneID" id="2541751"/>
<dbReference type="KEGG" id="spo:2541751"/>
<dbReference type="PomBase" id="SPAC22G7.11c"/>
<dbReference type="VEuPathDB" id="FungiDB:SPAC22G7.11c"/>
<dbReference type="eggNOG" id="ENOG502SY5S">
    <property type="taxonomic scope" value="Eukaryota"/>
</dbReference>
<dbReference type="HOGENOM" id="CLU_107705_0_0_1"/>
<dbReference type="InParanoid" id="Q09802"/>
<dbReference type="PhylomeDB" id="Q09802"/>
<dbReference type="PRO" id="PR:Q09802"/>
<dbReference type="Proteomes" id="UP000002485">
    <property type="component" value="Chromosome I"/>
</dbReference>
<dbReference type="GO" id="GO:0005737">
    <property type="term" value="C:cytoplasm"/>
    <property type="evidence" value="ECO:0000318"/>
    <property type="project" value="GO_Central"/>
</dbReference>
<dbReference type="GO" id="GO:0005829">
    <property type="term" value="C:cytosol"/>
    <property type="evidence" value="ECO:0007005"/>
    <property type="project" value="PomBase"/>
</dbReference>
<dbReference type="GO" id="GO:0005634">
    <property type="term" value="C:nucleus"/>
    <property type="evidence" value="ECO:0007005"/>
    <property type="project" value="PomBase"/>
</dbReference>
<dbReference type="InterPro" id="IPR018824">
    <property type="entry name" value="Conidiation-specific_6"/>
</dbReference>
<dbReference type="InterPro" id="IPR052670">
    <property type="entry name" value="UPF0654_domain"/>
</dbReference>
<dbReference type="PANTHER" id="PTHR36576">
    <property type="entry name" value="UPF0654 PROTEIN C11D3.01C-RELATED"/>
    <property type="match status" value="1"/>
</dbReference>
<dbReference type="PANTHER" id="PTHR36576:SF1">
    <property type="entry name" value="UPF0654 PROTEIN C11D3.01C-RELATED"/>
    <property type="match status" value="1"/>
</dbReference>
<dbReference type="Pfam" id="PF10346">
    <property type="entry name" value="Con-6"/>
    <property type="match status" value="2"/>
</dbReference>
<reference key="1">
    <citation type="journal article" date="2002" name="Nature">
        <title>The genome sequence of Schizosaccharomyces pombe.</title>
        <authorList>
            <person name="Wood V."/>
            <person name="Gwilliam R."/>
            <person name="Rajandream M.A."/>
            <person name="Lyne M.H."/>
            <person name="Lyne R."/>
            <person name="Stewart A."/>
            <person name="Sgouros J.G."/>
            <person name="Peat N."/>
            <person name="Hayles J."/>
            <person name="Baker S.G."/>
            <person name="Basham D."/>
            <person name="Bowman S."/>
            <person name="Brooks K."/>
            <person name="Brown D."/>
            <person name="Brown S."/>
            <person name="Chillingworth T."/>
            <person name="Churcher C.M."/>
            <person name="Collins M."/>
            <person name="Connor R."/>
            <person name="Cronin A."/>
            <person name="Davis P."/>
            <person name="Feltwell T."/>
            <person name="Fraser A."/>
            <person name="Gentles S."/>
            <person name="Goble A."/>
            <person name="Hamlin N."/>
            <person name="Harris D.E."/>
            <person name="Hidalgo J."/>
            <person name="Hodgson G."/>
            <person name="Holroyd S."/>
            <person name="Hornsby T."/>
            <person name="Howarth S."/>
            <person name="Huckle E.J."/>
            <person name="Hunt S."/>
            <person name="Jagels K."/>
            <person name="James K.D."/>
            <person name="Jones L."/>
            <person name="Jones M."/>
            <person name="Leather S."/>
            <person name="McDonald S."/>
            <person name="McLean J."/>
            <person name="Mooney P."/>
            <person name="Moule S."/>
            <person name="Mungall K.L."/>
            <person name="Murphy L.D."/>
            <person name="Niblett D."/>
            <person name="Odell C."/>
            <person name="Oliver K."/>
            <person name="O'Neil S."/>
            <person name="Pearson D."/>
            <person name="Quail M.A."/>
            <person name="Rabbinowitsch E."/>
            <person name="Rutherford K.M."/>
            <person name="Rutter S."/>
            <person name="Saunders D."/>
            <person name="Seeger K."/>
            <person name="Sharp S."/>
            <person name="Skelton J."/>
            <person name="Simmonds M.N."/>
            <person name="Squares R."/>
            <person name="Squares S."/>
            <person name="Stevens K."/>
            <person name="Taylor K."/>
            <person name="Taylor R.G."/>
            <person name="Tivey A."/>
            <person name="Walsh S.V."/>
            <person name="Warren T."/>
            <person name="Whitehead S."/>
            <person name="Woodward J.R."/>
            <person name="Volckaert G."/>
            <person name="Aert R."/>
            <person name="Robben J."/>
            <person name="Grymonprez B."/>
            <person name="Weltjens I."/>
            <person name="Vanstreels E."/>
            <person name="Rieger M."/>
            <person name="Schaefer M."/>
            <person name="Mueller-Auer S."/>
            <person name="Gabel C."/>
            <person name="Fuchs M."/>
            <person name="Duesterhoeft A."/>
            <person name="Fritzc C."/>
            <person name="Holzer E."/>
            <person name="Moestl D."/>
            <person name="Hilbert H."/>
            <person name="Borzym K."/>
            <person name="Langer I."/>
            <person name="Beck A."/>
            <person name="Lehrach H."/>
            <person name="Reinhardt R."/>
            <person name="Pohl T.M."/>
            <person name="Eger P."/>
            <person name="Zimmermann W."/>
            <person name="Wedler H."/>
            <person name="Wambutt R."/>
            <person name="Purnelle B."/>
            <person name="Goffeau A."/>
            <person name="Cadieu E."/>
            <person name="Dreano S."/>
            <person name="Gloux S."/>
            <person name="Lelaure V."/>
            <person name="Mottier S."/>
            <person name="Galibert F."/>
            <person name="Aves S.J."/>
            <person name="Xiang Z."/>
            <person name="Hunt C."/>
            <person name="Moore K."/>
            <person name="Hurst S.M."/>
            <person name="Lucas M."/>
            <person name="Rochet M."/>
            <person name="Gaillardin C."/>
            <person name="Tallada V.A."/>
            <person name="Garzon A."/>
            <person name="Thode G."/>
            <person name="Daga R.R."/>
            <person name="Cruzado L."/>
            <person name="Jimenez J."/>
            <person name="Sanchez M."/>
            <person name="del Rey F."/>
            <person name="Benito J."/>
            <person name="Dominguez A."/>
            <person name="Revuelta J.L."/>
            <person name="Moreno S."/>
            <person name="Armstrong J."/>
            <person name="Forsburg S.L."/>
            <person name="Cerutti L."/>
            <person name="Lowe T."/>
            <person name="McCombie W.R."/>
            <person name="Paulsen I."/>
            <person name="Potashkin J."/>
            <person name="Shpakovski G.V."/>
            <person name="Ussery D."/>
            <person name="Barrell B.G."/>
            <person name="Nurse P."/>
        </authorList>
    </citation>
    <scope>NUCLEOTIDE SEQUENCE [LARGE SCALE GENOMIC DNA]</scope>
    <source>
        <strain>972 / ATCC 24843</strain>
    </source>
</reference>
<proteinExistence type="inferred from homology"/>
<accession>Q09802</accession>
<comment type="similarity">
    <text evidence="2">Belongs to the UPF0654 (con-6) family.</text>
</comment>
<protein>
    <recommendedName>
        <fullName>UPF0654 protein C22G7.11c</fullName>
    </recommendedName>
</protein>
<evidence type="ECO:0000256" key="1">
    <source>
        <dbReference type="SAM" id="MobiDB-lite"/>
    </source>
</evidence>
<evidence type="ECO:0000305" key="2"/>
<gene>
    <name type="ORF">SPAC22G7.11c</name>
    <name type="ORF">SPAC4G8.01c</name>
</gene>
<sequence>MPDPNRVLAGKKATLHNPNVSQQAKERAEDYIESHSSGQETGDYSAQAGGRDLDYEDLGDYDEDADFDNEEGLNVLGDESGFVDDPMKTGDLVEEDQLEGKNIENVRGGYKATMHNPNVSKQAKTRAQRALEEIDDETQA</sequence>
<name>YAAB_SCHPO</name>
<feature type="chain" id="PRO_0000116408" description="UPF0654 protein C22G7.11c">
    <location>
        <begin position="1"/>
        <end position="140"/>
    </location>
</feature>
<feature type="region of interest" description="Disordered" evidence="1">
    <location>
        <begin position="1"/>
        <end position="88"/>
    </location>
</feature>
<feature type="region of interest" description="Disordered" evidence="1">
    <location>
        <begin position="110"/>
        <end position="140"/>
    </location>
</feature>
<feature type="compositionally biased region" description="Basic and acidic residues" evidence="1">
    <location>
        <begin position="24"/>
        <end position="33"/>
    </location>
</feature>
<feature type="compositionally biased region" description="Polar residues" evidence="1">
    <location>
        <begin position="34"/>
        <end position="44"/>
    </location>
</feature>
<feature type="compositionally biased region" description="Acidic residues" evidence="1">
    <location>
        <begin position="54"/>
        <end position="71"/>
    </location>
</feature>